<accession>Q5ENZ7</accession>
<evidence type="ECO:0000250" key="1"/>
<evidence type="ECO:0000250" key="2">
    <source>
        <dbReference type="UniProtKB" id="P20797"/>
    </source>
</evidence>
<evidence type="ECO:0000250" key="3">
    <source>
        <dbReference type="UniProtKB" id="Q8WP90"/>
    </source>
</evidence>
<evidence type="ECO:0000255" key="4"/>
<evidence type="ECO:0000305" key="5"/>
<evidence type="ECO:0000312" key="6">
    <source>
        <dbReference type="EMBL" id="AAW80701.1"/>
    </source>
</evidence>
<dbReference type="EMBL" id="AY818634">
    <property type="protein sequence ID" value="AAW80701.1"/>
    <property type="molecule type" value="Genomic_DNA"/>
</dbReference>
<dbReference type="SMR" id="Q5ENZ7"/>
<dbReference type="GO" id="GO:0005615">
    <property type="term" value="C:extracellular space"/>
    <property type="evidence" value="ECO:0000250"/>
    <property type="project" value="UniProtKB"/>
</dbReference>
<dbReference type="GO" id="GO:0005550">
    <property type="term" value="F:pheromone binding"/>
    <property type="evidence" value="ECO:0007669"/>
    <property type="project" value="UniProtKB-KW"/>
</dbReference>
<dbReference type="GO" id="GO:0019236">
    <property type="term" value="P:response to pheromone"/>
    <property type="evidence" value="ECO:0007669"/>
    <property type="project" value="UniProtKB-KW"/>
</dbReference>
<dbReference type="GO" id="GO:0035176">
    <property type="term" value="P:social behavior"/>
    <property type="evidence" value="ECO:0000250"/>
    <property type="project" value="UniProtKB"/>
</dbReference>
<dbReference type="CDD" id="cd23992">
    <property type="entry name" value="PBP_GOBP"/>
    <property type="match status" value="1"/>
</dbReference>
<dbReference type="FunFam" id="1.10.238.20:FF:000004">
    <property type="entry name" value="Pheromone-binding protein Gp-9"/>
    <property type="match status" value="1"/>
</dbReference>
<dbReference type="Gene3D" id="1.10.238.20">
    <property type="entry name" value="Pheromone/general odorant binding protein domain"/>
    <property type="match status" value="1"/>
</dbReference>
<dbReference type="InterPro" id="IPR006170">
    <property type="entry name" value="PBP/GOBP"/>
</dbReference>
<dbReference type="InterPro" id="IPR036728">
    <property type="entry name" value="PBP_GOBP_sf"/>
</dbReference>
<dbReference type="InterPro" id="IPR022354">
    <property type="entry name" value="Pheromone-bd_protein_Gp-9"/>
</dbReference>
<dbReference type="Pfam" id="PF01395">
    <property type="entry name" value="PBP_GOBP"/>
    <property type="match status" value="1"/>
</dbReference>
<dbReference type="PRINTS" id="PR02007">
    <property type="entry name" value="ODORANTBPGP9"/>
</dbReference>
<dbReference type="SUPFAM" id="SSF47565">
    <property type="entry name" value="Insect pheromone/odorant-binding proteins"/>
    <property type="match status" value="1"/>
</dbReference>
<comment type="function">
    <text evidence="3">Colony queen number, a major feature of social organization, is associated with worker genotype for Gp-9. Colonies are headed by either a single reproductive queen (monogyne form) or multiple queens (polygyne form). Differences in worker Gp-9 genotypes between social forms may cause differences in workers' abilities to recognize queens and regulate their numbers (By similarity).</text>
</comment>
<comment type="subunit">
    <text evidence="2">Homodimer.</text>
</comment>
<comment type="subcellular location">
    <subcellularLocation>
        <location evidence="1">Secreted</location>
    </subcellularLocation>
</comment>
<comment type="similarity">
    <text evidence="4">Belongs to the PBP/GOBP family.</text>
</comment>
<proteinExistence type="inferred from homology"/>
<name>PBGP9_SOLSB</name>
<protein>
    <recommendedName>
        <fullName>Pheromone-binding protein Gp-9</fullName>
        <shortName>PBP</shortName>
    </recommendedName>
    <alternativeName>
        <fullName>Putative odorant-binding protein Gp-9</fullName>
    </alternativeName>
</protein>
<gene>
    <name evidence="6" type="primary">Gp-9</name>
</gene>
<sequence length="153" mass="16801">MKTFVLHIFIFALVAFASASRDSAKKIGSQYDNYATCLAEHSLTEDDIFSIGEVSSGQHKTNHEDTELHKNGCVMQCLLEKDGLMSGADYDEEKIREDYIKETGAQPGDQRIEALNACMQETKDMEDKCDKSLLLVACVLAAEAVLADSNEGA</sequence>
<feature type="signal peptide" evidence="3">
    <location>
        <begin position="1"/>
        <end position="19"/>
    </location>
</feature>
<feature type="chain" id="PRO_5000094278" description="Pheromone-binding protein Gp-9" evidence="3">
    <location>
        <begin position="20"/>
        <end position="153"/>
    </location>
</feature>
<feature type="disulfide bond" evidence="2">
    <location>
        <begin position="37"/>
        <end position="77"/>
    </location>
</feature>
<feature type="disulfide bond" evidence="2">
    <location>
        <begin position="73"/>
        <end position="129"/>
    </location>
</feature>
<feature type="disulfide bond" evidence="2">
    <location>
        <begin position="118"/>
        <end position="138"/>
    </location>
</feature>
<keyword id="KW-0085">Behavior</keyword>
<keyword id="KW-1015">Disulfide bond</keyword>
<keyword id="KW-0589">Pheromone response</keyword>
<keyword id="KW-0590">Pheromone-binding</keyword>
<keyword id="KW-0964">Secreted</keyword>
<keyword id="KW-0732">Signal</keyword>
<keyword id="KW-0813">Transport</keyword>
<organism>
    <name type="scientific">Solenopsis sp. (strain B0-151)</name>
    <name type="common">Fire ant</name>
    <dbReference type="NCBI Taxonomy" id="310440"/>
    <lineage>
        <taxon>Eukaryota</taxon>
        <taxon>Metazoa</taxon>
        <taxon>Ecdysozoa</taxon>
        <taxon>Arthropoda</taxon>
        <taxon>Hexapoda</taxon>
        <taxon>Insecta</taxon>
        <taxon>Pterygota</taxon>
        <taxon>Neoptera</taxon>
        <taxon>Endopterygota</taxon>
        <taxon>Hymenoptera</taxon>
        <taxon>Apocrita</taxon>
        <taxon>Aculeata</taxon>
        <taxon>Formicoidea</taxon>
        <taxon>Formicidae</taxon>
        <taxon>Myrmicinae</taxon>
        <taxon>Solenopsis</taxon>
    </lineage>
</organism>
<reference evidence="5 6" key="1">
    <citation type="journal article" date="2005" name="Mol. Biol. Evol.">
        <title>Molecular evolutionary analyses of the odorant-binding protein gene Gp-9 in fire ants and other Solenopsis species.</title>
        <authorList>
            <person name="Krieger M.J.B."/>
            <person name="Ross K.G."/>
        </authorList>
    </citation>
    <scope>NUCLEOTIDE SEQUENCE [GENOMIC DNA] (ALLELE B1)</scope>
</reference>